<accession>Q0A574</accession>
<protein>
    <recommendedName>
        <fullName evidence="1">Argininosuccinate lyase</fullName>
        <shortName evidence="1">ASAL</shortName>
        <ecNumber evidence="1">4.3.2.1</ecNumber>
    </recommendedName>
    <alternativeName>
        <fullName evidence="1">Arginosuccinase</fullName>
    </alternativeName>
</protein>
<evidence type="ECO:0000255" key="1">
    <source>
        <dbReference type="HAMAP-Rule" id="MF_00006"/>
    </source>
</evidence>
<dbReference type="EC" id="4.3.2.1" evidence="1"/>
<dbReference type="EMBL" id="CP000453">
    <property type="protein sequence ID" value="ABI58013.1"/>
    <property type="molecule type" value="Genomic_DNA"/>
</dbReference>
<dbReference type="RefSeq" id="WP_011630406.1">
    <property type="nucleotide sequence ID" value="NC_008340.1"/>
</dbReference>
<dbReference type="SMR" id="Q0A574"/>
<dbReference type="KEGG" id="aeh:Mlg_2673"/>
<dbReference type="eggNOG" id="COG0165">
    <property type="taxonomic scope" value="Bacteria"/>
</dbReference>
<dbReference type="HOGENOM" id="CLU_027272_2_3_6"/>
<dbReference type="OrthoDB" id="9769623at2"/>
<dbReference type="UniPathway" id="UPA00068">
    <property type="reaction ID" value="UER00114"/>
</dbReference>
<dbReference type="Proteomes" id="UP000001962">
    <property type="component" value="Chromosome"/>
</dbReference>
<dbReference type="GO" id="GO:0005829">
    <property type="term" value="C:cytosol"/>
    <property type="evidence" value="ECO:0007669"/>
    <property type="project" value="TreeGrafter"/>
</dbReference>
<dbReference type="GO" id="GO:0004056">
    <property type="term" value="F:argininosuccinate lyase activity"/>
    <property type="evidence" value="ECO:0007669"/>
    <property type="project" value="UniProtKB-UniRule"/>
</dbReference>
<dbReference type="GO" id="GO:0042450">
    <property type="term" value="P:arginine biosynthetic process via ornithine"/>
    <property type="evidence" value="ECO:0007669"/>
    <property type="project" value="InterPro"/>
</dbReference>
<dbReference type="GO" id="GO:0006526">
    <property type="term" value="P:L-arginine biosynthetic process"/>
    <property type="evidence" value="ECO:0007669"/>
    <property type="project" value="UniProtKB-UniRule"/>
</dbReference>
<dbReference type="CDD" id="cd01359">
    <property type="entry name" value="Argininosuccinate_lyase"/>
    <property type="match status" value="1"/>
</dbReference>
<dbReference type="FunFam" id="1.10.275.10:FF:000002">
    <property type="entry name" value="Argininosuccinate lyase"/>
    <property type="match status" value="1"/>
</dbReference>
<dbReference type="FunFam" id="1.10.40.30:FF:000001">
    <property type="entry name" value="Argininosuccinate lyase"/>
    <property type="match status" value="1"/>
</dbReference>
<dbReference type="FunFam" id="1.20.200.10:FF:000015">
    <property type="entry name" value="argininosuccinate lyase isoform X2"/>
    <property type="match status" value="1"/>
</dbReference>
<dbReference type="Gene3D" id="1.10.40.30">
    <property type="entry name" value="Fumarase/aspartase (C-terminal domain)"/>
    <property type="match status" value="1"/>
</dbReference>
<dbReference type="Gene3D" id="1.20.200.10">
    <property type="entry name" value="Fumarase/aspartase (Central domain)"/>
    <property type="match status" value="1"/>
</dbReference>
<dbReference type="Gene3D" id="1.10.275.10">
    <property type="entry name" value="Fumarase/aspartase (N-terminal domain)"/>
    <property type="match status" value="1"/>
</dbReference>
<dbReference type="HAMAP" id="MF_00006">
    <property type="entry name" value="Arg_succ_lyase"/>
    <property type="match status" value="1"/>
</dbReference>
<dbReference type="InterPro" id="IPR029419">
    <property type="entry name" value="Arg_succ_lyase_C"/>
</dbReference>
<dbReference type="InterPro" id="IPR009049">
    <property type="entry name" value="Argininosuccinate_lyase"/>
</dbReference>
<dbReference type="InterPro" id="IPR024083">
    <property type="entry name" value="Fumarase/histidase_N"/>
</dbReference>
<dbReference type="InterPro" id="IPR020557">
    <property type="entry name" value="Fumarate_lyase_CS"/>
</dbReference>
<dbReference type="InterPro" id="IPR000362">
    <property type="entry name" value="Fumarate_lyase_fam"/>
</dbReference>
<dbReference type="InterPro" id="IPR022761">
    <property type="entry name" value="Fumarate_lyase_N"/>
</dbReference>
<dbReference type="InterPro" id="IPR008948">
    <property type="entry name" value="L-Aspartase-like"/>
</dbReference>
<dbReference type="NCBIfam" id="TIGR00838">
    <property type="entry name" value="argH"/>
    <property type="match status" value="1"/>
</dbReference>
<dbReference type="PANTHER" id="PTHR43814">
    <property type="entry name" value="ARGININOSUCCINATE LYASE"/>
    <property type="match status" value="1"/>
</dbReference>
<dbReference type="PANTHER" id="PTHR43814:SF1">
    <property type="entry name" value="ARGININOSUCCINATE LYASE"/>
    <property type="match status" value="1"/>
</dbReference>
<dbReference type="Pfam" id="PF14698">
    <property type="entry name" value="ASL_C2"/>
    <property type="match status" value="1"/>
</dbReference>
<dbReference type="Pfam" id="PF00206">
    <property type="entry name" value="Lyase_1"/>
    <property type="match status" value="1"/>
</dbReference>
<dbReference type="PRINTS" id="PR00145">
    <property type="entry name" value="ARGSUCLYASE"/>
</dbReference>
<dbReference type="PRINTS" id="PR00149">
    <property type="entry name" value="FUMRATELYASE"/>
</dbReference>
<dbReference type="SUPFAM" id="SSF48557">
    <property type="entry name" value="L-aspartase-like"/>
    <property type="match status" value="1"/>
</dbReference>
<dbReference type="PROSITE" id="PS00163">
    <property type="entry name" value="FUMARATE_LYASES"/>
    <property type="match status" value="1"/>
</dbReference>
<gene>
    <name evidence="1" type="primary">argH</name>
    <name type="ordered locus">Mlg_2673</name>
</gene>
<sequence>MTDKNTSEQLWTGRFTEATDAFVEQFSASEHFDRRLYRQDIAGSMAHARMLAEVGVLTAEERDRIVDGLTRIREEIEHGQFQWSPKLEDVHMNIEKRLTDLIGEAGKKLHTGRSRNDQVATDIRLWLREAIDGILDELLRLQAGLVELAELEADTIMPGFTHMQVAQPVTFGHHLLAWYEMLVRDQGRLEDCRKRLNQMPLGCAALAGTSFPIDREQTCSELGFDRPTRNSLDSVSDRDFAIEFNAAAALVMTHLSRMAEEVILWASPHFGFIDLPDRFCTGSSIMPQKKNPDVAELVRGKTARVHGNLNALLVLMKGQPLAYNRDNQEDKEPLFDTADTLRDALTAFADMLPAMEVQREACYRAARAGFATATDLADYLVRKGVPFRDAHEIVGRAVRYASDEGRDLSELELDELQQFSGTISEDVFEVLTLEGSVAARNHLGGTAPAQVRARVAEARDRLRLLMGK</sequence>
<organism>
    <name type="scientific">Alkalilimnicola ehrlichii (strain ATCC BAA-1101 / DSM 17681 / MLHE-1)</name>
    <dbReference type="NCBI Taxonomy" id="187272"/>
    <lineage>
        <taxon>Bacteria</taxon>
        <taxon>Pseudomonadati</taxon>
        <taxon>Pseudomonadota</taxon>
        <taxon>Gammaproteobacteria</taxon>
        <taxon>Chromatiales</taxon>
        <taxon>Ectothiorhodospiraceae</taxon>
        <taxon>Alkalilimnicola</taxon>
    </lineage>
</organism>
<name>ARLY_ALKEH</name>
<keyword id="KW-0028">Amino-acid biosynthesis</keyword>
<keyword id="KW-0055">Arginine biosynthesis</keyword>
<keyword id="KW-0963">Cytoplasm</keyword>
<keyword id="KW-0456">Lyase</keyword>
<keyword id="KW-1185">Reference proteome</keyword>
<feature type="chain" id="PRO_0000321426" description="Argininosuccinate lyase">
    <location>
        <begin position="1"/>
        <end position="468"/>
    </location>
</feature>
<comment type="catalytic activity">
    <reaction evidence="1">
        <text>2-(N(omega)-L-arginino)succinate = fumarate + L-arginine</text>
        <dbReference type="Rhea" id="RHEA:24020"/>
        <dbReference type="ChEBI" id="CHEBI:29806"/>
        <dbReference type="ChEBI" id="CHEBI:32682"/>
        <dbReference type="ChEBI" id="CHEBI:57472"/>
        <dbReference type="EC" id="4.3.2.1"/>
    </reaction>
</comment>
<comment type="pathway">
    <text evidence="1">Amino-acid biosynthesis; L-arginine biosynthesis; L-arginine from L-ornithine and carbamoyl phosphate: step 3/3.</text>
</comment>
<comment type="subcellular location">
    <subcellularLocation>
        <location evidence="1">Cytoplasm</location>
    </subcellularLocation>
</comment>
<comment type="similarity">
    <text evidence="1">Belongs to the lyase 1 family. Argininosuccinate lyase subfamily.</text>
</comment>
<proteinExistence type="inferred from homology"/>
<reference key="1">
    <citation type="submission" date="2006-08" db="EMBL/GenBank/DDBJ databases">
        <title>Complete sequence of Alkalilimnicola ehrilichei MLHE-1.</title>
        <authorList>
            <person name="Copeland A."/>
            <person name="Lucas S."/>
            <person name="Lapidus A."/>
            <person name="Barry K."/>
            <person name="Detter J.C."/>
            <person name="Glavina del Rio T."/>
            <person name="Hammon N."/>
            <person name="Israni S."/>
            <person name="Dalin E."/>
            <person name="Tice H."/>
            <person name="Pitluck S."/>
            <person name="Sims D."/>
            <person name="Brettin T."/>
            <person name="Bruce D."/>
            <person name="Han C."/>
            <person name="Tapia R."/>
            <person name="Gilna P."/>
            <person name="Schmutz J."/>
            <person name="Larimer F."/>
            <person name="Land M."/>
            <person name="Hauser L."/>
            <person name="Kyrpides N."/>
            <person name="Mikhailova N."/>
            <person name="Oremland R.S."/>
            <person name="Hoeft S.E."/>
            <person name="Switzer-Blum J."/>
            <person name="Kulp T."/>
            <person name="King G."/>
            <person name="Tabita R."/>
            <person name="Witte B."/>
            <person name="Santini J.M."/>
            <person name="Basu P."/>
            <person name="Hollibaugh J.T."/>
            <person name="Xie G."/>
            <person name="Stolz J.F."/>
            <person name="Richardson P."/>
        </authorList>
    </citation>
    <scope>NUCLEOTIDE SEQUENCE [LARGE SCALE GENOMIC DNA]</scope>
    <source>
        <strain>ATCC BAA-1101 / DSM 17681 / MLHE-1</strain>
    </source>
</reference>